<protein>
    <recommendedName>
        <fullName evidence="3">BLOC-1-related complex subunit 5</fullName>
    </recommendedName>
</protein>
<name>BORC5_CHICK</name>
<organism>
    <name type="scientific">Gallus gallus</name>
    <name type="common">Chicken</name>
    <dbReference type="NCBI Taxonomy" id="9031"/>
    <lineage>
        <taxon>Eukaryota</taxon>
        <taxon>Metazoa</taxon>
        <taxon>Chordata</taxon>
        <taxon>Craniata</taxon>
        <taxon>Vertebrata</taxon>
        <taxon>Euteleostomi</taxon>
        <taxon>Archelosauria</taxon>
        <taxon>Archosauria</taxon>
        <taxon>Dinosauria</taxon>
        <taxon>Saurischia</taxon>
        <taxon>Theropoda</taxon>
        <taxon>Coelurosauria</taxon>
        <taxon>Aves</taxon>
        <taxon>Neognathae</taxon>
        <taxon>Galloanserae</taxon>
        <taxon>Galliformes</taxon>
        <taxon>Phasianidae</taxon>
        <taxon>Phasianinae</taxon>
        <taxon>Gallus</taxon>
    </lineage>
</organism>
<evidence type="ECO:0000250" key="1">
    <source>
        <dbReference type="UniProtKB" id="Q969J3"/>
    </source>
</evidence>
<evidence type="ECO:0000256" key="2">
    <source>
        <dbReference type="SAM" id="MobiDB-lite"/>
    </source>
</evidence>
<evidence type="ECO:0000305" key="3"/>
<evidence type="ECO:0000312" key="4">
    <source>
        <dbReference type="EMBL" id="CAG32184.1"/>
    </source>
</evidence>
<feature type="chain" id="PRO_0000318598" description="BLOC-1-related complex subunit 5">
    <location>
        <begin position="1"/>
        <end position="185"/>
    </location>
</feature>
<feature type="region of interest" description="Disordered" evidence="2">
    <location>
        <begin position="1"/>
        <end position="20"/>
    </location>
</feature>
<comment type="function">
    <text evidence="1">As part of a BORC-like complex may play a role in lysosomes movement and localization at the cell periphery. Associated with the cytosolic face of lysosomes, this complex may couple lysosomes to microtubule plus-end-directed kinesin motor.</text>
</comment>
<comment type="subcellular location">
    <subcellularLocation>
        <location evidence="1">Lysosome membrane</location>
        <topology evidence="1">Lipid-anchor</topology>
        <orientation evidence="1">Cytoplasmic side</orientation>
    </subcellularLocation>
</comment>
<comment type="similarity">
    <text evidence="3">Belongs to the BORCS5 family.</text>
</comment>
<reference key="1">
    <citation type="journal article" date="2005" name="Genome Biol.">
        <title>Full-length cDNAs from chicken bursal lymphocytes to facilitate gene function analysis.</title>
        <authorList>
            <person name="Caldwell R.B."/>
            <person name="Kierzek A.M."/>
            <person name="Arakawa H."/>
            <person name="Bezzubov Y."/>
            <person name="Zaim J."/>
            <person name="Fiedler P."/>
            <person name="Kutter S."/>
            <person name="Blagodatski A."/>
            <person name="Kostovska D."/>
            <person name="Koter M."/>
            <person name="Plachy J."/>
            <person name="Carninci P."/>
            <person name="Hayashizaki Y."/>
            <person name="Buerstedde J.-M."/>
        </authorList>
    </citation>
    <scope>NUCLEOTIDE SEQUENCE [LARGE SCALE MRNA]</scope>
    <source>
        <strain>CB</strain>
        <tissue>Bursa of Fabricius</tissue>
    </source>
</reference>
<gene>
    <name evidence="1" type="primary">BORCS5</name>
    <name evidence="4" type="ORF">RCJMB04_19j2</name>
</gene>
<accession>Q5ZJA9</accession>
<proteinExistence type="evidence at transcript level"/>
<dbReference type="EMBL" id="AJ720525">
    <property type="protein sequence ID" value="CAG32184.1"/>
    <property type="molecule type" value="mRNA"/>
</dbReference>
<dbReference type="RefSeq" id="NP_001026528.1">
    <property type="nucleotide sequence ID" value="NM_001031357.2"/>
</dbReference>
<dbReference type="SMR" id="Q5ZJA9"/>
<dbReference type="FunCoup" id="Q5ZJA9">
    <property type="interactions" value="1481"/>
</dbReference>
<dbReference type="STRING" id="9031.ENSGALP00000049256"/>
<dbReference type="PaxDb" id="9031-ENSGALP00000021904"/>
<dbReference type="Ensembl" id="ENSGALT00010052595.1">
    <property type="protein sequence ID" value="ENSGALP00010031501.1"/>
    <property type="gene ID" value="ENSGALG00010021652.1"/>
</dbReference>
<dbReference type="GeneID" id="426116"/>
<dbReference type="KEGG" id="gga:426116"/>
<dbReference type="CTD" id="118426"/>
<dbReference type="VEuPathDB" id="HostDB:geneid_426116"/>
<dbReference type="eggNOG" id="KOG4515">
    <property type="taxonomic scope" value="Eukaryota"/>
</dbReference>
<dbReference type="GeneTree" id="ENSGT00390000015016"/>
<dbReference type="InParanoid" id="Q5ZJA9"/>
<dbReference type="OrthoDB" id="10035640at2759"/>
<dbReference type="PhylomeDB" id="Q5ZJA9"/>
<dbReference type="PRO" id="PR:Q5ZJA9"/>
<dbReference type="Proteomes" id="UP000000539">
    <property type="component" value="Chromosome 1"/>
</dbReference>
<dbReference type="Bgee" id="ENSGALG00000040393">
    <property type="expression patterns" value="Expressed in cerebellum and 12 other cell types or tissues"/>
</dbReference>
<dbReference type="GO" id="GO:0099078">
    <property type="term" value="C:BORC complex"/>
    <property type="evidence" value="ECO:0000250"/>
    <property type="project" value="UniProtKB"/>
</dbReference>
<dbReference type="GO" id="GO:0098574">
    <property type="term" value="C:cytoplasmic side of lysosomal membrane"/>
    <property type="evidence" value="ECO:0000250"/>
    <property type="project" value="UniProtKB"/>
</dbReference>
<dbReference type="GO" id="GO:0016020">
    <property type="term" value="C:membrane"/>
    <property type="evidence" value="ECO:0000250"/>
    <property type="project" value="UniProtKB"/>
</dbReference>
<dbReference type="GO" id="GO:0030672">
    <property type="term" value="C:synaptic vesicle membrane"/>
    <property type="evidence" value="ECO:0000318"/>
    <property type="project" value="GO_Central"/>
</dbReference>
<dbReference type="GO" id="GO:0032418">
    <property type="term" value="P:lysosome localization"/>
    <property type="evidence" value="ECO:0000250"/>
    <property type="project" value="UniProtKB"/>
</dbReference>
<dbReference type="GO" id="GO:0072384">
    <property type="term" value="P:organelle transport along microtubule"/>
    <property type="evidence" value="ECO:0000250"/>
    <property type="project" value="UniProtKB"/>
</dbReference>
<dbReference type="GO" id="GO:1903744">
    <property type="term" value="P:positive regulation of anterograde synaptic vesicle transport"/>
    <property type="evidence" value="ECO:0000318"/>
    <property type="project" value="GO_Central"/>
</dbReference>
<dbReference type="CDD" id="cd22789">
    <property type="entry name" value="BORCS5-like"/>
    <property type="match status" value="1"/>
</dbReference>
<dbReference type="InterPro" id="IPR018780">
    <property type="entry name" value="TBORCS5"/>
</dbReference>
<dbReference type="PANTHER" id="PTHR31634">
    <property type="entry name" value="BLOC-1-RELATED COMPLEX SUBUNIT 5"/>
    <property type="match status" value="1"/>
</dbReference>
<dbReference type="PANTHER" id="PTHR31634:SF2">
    <property type="entry name" value="BLOC-1-RELATED COMPLEX SUBUNIT 5"/>
    <property type="match status" value="1"/>
</dbReference>
<dbReference type="Pfam" id="PF10158">
    <property type="entry name" value="LOH1CR12"/>
    <property type="match status" value="1"/>
</dbReference>
<sequence length="185" mass="20934">MAGVNGSHASPSPAKQRAKMDDIVVVAPGTQSSRNVSNDPDVIKLQEIPTFQPLLKGLLSGQTSPTNTKLEKLDPHQVLQLCLRYQDHLHQCAEAVAFDQNALVKRIKEMDLSVETLYSFMQERQKKYAKYAEQIQKVNEMSAILRRIQMGIDQTVPLMERLNSMLPESEQLEPFSMKPDREIKS</sequence>
<keyword id="KW-0449">Lipoprotein</keyword>
<keyword id="KW-0458">Lysosome</keyword>
<keyword id="KW-0472">Membrane</keyword>
<keyword id="KW-1185">Reference proteome</keyword>